<name>FHUC_ECOLI</name>
<organism>
    <name type="scientific">Escherichia coli (strain K12)</name>
    <dbReference type="NCBI Taxonomy" id="83333"/>
    <lineage>
        <taxon>Bacteria</taxon>
        <taxon>Pseudomonadati</taxon>
        <taxon>Pseudomonadota</taxon>
        <taxon>Gammaproteobacteria</taxon>
        <taxon>Enterobacterales</taxon>
        <taxon>Enterobacteriaceae</taxon>
        <taxon>Escherichia</taxon>
    </lineage>
</organism>
<feature type="chain" id="PRO_0000092327" description="Iron(3+)-hydroxamate import ATP-binding protein FhuC">
    <location>
        <begin position="1"/>
        <end position="265"/>
    </location>
</feature>
<feature type="domain" description="ABC transporter" evidence="1">
    <location>
        <begin position="12"/>
        <end position="248"/>
    </location>
</feature>
<feature type="binding site" evidence="1">
    <location>
        <begin position="44"/>
        <end position="51"/>
    </location>
    <ligand>
        <name>ATP</name>
        <dbReference type="ChEBI" id="CHEBI:30616"/>
    </ligand>
</feature>
<feature type="binding site" evidence="1">
    <location>
        <begin position="168"/>
        <end position="179"/>
    </location>
    <ligand>
        <name>ATP</name>
        <dbReference type="ChEBI" id="CHEBI:30616"/>
    </ligand>
</feature>
<feature type="mutagenesis site" description="Lack of activity." evidence="2">
    <original>K</original>
    <variation>Q</variation>
    <location>
        <position position="50"/>
    </location>
</feature>
<feature type="mutagenesis site" description="Lack of activity." evidence="2">
    <original>D</original>
    <variation>E</variation>
    <location>
        <position position="172"/>
    </location>
</feature>
<feature type="mutagenesis site" description="Lack of activity." evidence="4">
    <original>E</original>
    <variation>A</variation>
    <location>
        <position position="173"/>
    </location>
</feature>
<feature type="sequence conflict" description="In Ref. 2; CAA29254." evidence="5" ref="2">
    <original>S</original>
    <variation>C</variation>
    <location>
        <position position="31"/>
    </location>
</feature>
<feature type="sequence conflict" description="In Ref. 1; AAB61769 and 3; no nucleotide entry." evidence="5" ref="1 3">
    <original>MIAQGTPAEIMRGETLEMIYGIPM</original>
    <variation>SDCSGNACGNYARRNPRNDLWHPD</variation>
    <location>
        <begin position="226"/>
        <end position="249"/>
    </location>
</feature>
<feature type="strand" evidence="6">
    <location>
        <begin position="12"/>
        <end position="17"/>
    </location>
</feature>
<feature type="strand" evidence="6">
    <location>
        <begin position="30"/>
        <end position="33"/>
    </location>
</feature>
<feature type="strand" evidence="6">
    <location>
        <begin position="36"/>
        <end position="43"/>
    </location>
</feature>
<feature type="helix" evidence="6">
    <location>
        <begin position="50"/>
        <end position="57"/>
    </location>
</feature>
<feature type="strand" evidence="6">
    <location>
        <begin position="68"/>
        <end position="73"/>
    </location>
</feature>
<feature type="helix" evidence="6">
    <location>
        <begin position="80"/>
        <end position="86"/>
    </location>
</feature>
<feature type="strand" evidence="6">
    <location>
        <begin position="87"/>
        <end position="89"/>
    </location>
</feature>
<feature type="helix" evidence="6">
    <location>
        <begin position="102"/>
        <end position="108"/>
    </location>
</feature>
<feature type="helix" evidence="6">
    <location>
        <begin position="111"/>
        <end position="114"/>
    </location>
</feature>
<feature type="helix" evidence="6">
    <location>
        <begin position="125"/>
        <end position="134"/>
    </location>
</feature>
<feature type="strand" evidence="6">
    <location>
        <begin position="139"/>
        <end position="141"/>
    </location>
</feature>
<feature type="turn" evidence="6">
    <location>
        <begin position="145"/>
        <end position="147"/>
    </location>
</feature>
<feature type="helix" evidence="6">
    <location>
        <begin position="150"/>
        <end position="163"/>
    </location>
</feature>
<feature type="strand" evidence="6">
    <location>
        <begin position="167"/>
        <end position="175"/>
    </location>
</feature>
<feature type="helix" evidence="6">
    <location>
        <begin position="180"/>
        <end position="197"/>
    </location>
</feature>
<feature type="strand" evidence="6">
    <location>
        <begin position="200"/>
        <end position="204"/>
    </location>
</feature>
<feature type="helix" evidence="6">
    <location>
        <begin position="208"/>
        <end position="213"/>
    </location>
</feature>
<feature type="strand" evidence="6">
    <location>
        <begin position="216"/>
        <end position="220"/>
    </location>
</feature>
<feature type="strand" evidence="6">
    <location>
        <begin position="222"/>
        <end position="225"/>
    </location>
</feature>
<feature type="strand" evidence="6">
    <location>
        <begin position="228"/>
        <end position="230"/>
    </location>
</feature>
<feature type="turn" evidence="6">
    <location>
        <begin position="232"/>
        <end position="234"/>
    </location>
</feature>
<feature type="helix" evidence="6">
    <location>
        <begin position="237"/>
        <end position="245"/>
    </location>
</feature>
<feature type="strand" evidence="6">
    <location>
        <begin position="250"/>
        <end position="252"/>
    </location>
</feature>
<feature type="strand" evidence="6">
    <location>
        <begin position="255"/>
        <end position="259"/>
    </location>
</feature>
<feature type="strand" evidence="6">
    <location>
        <begin position="261"/>
        <end position="263"/>
    </location>
</feature>
<keyword id="KW-0002">3D-structure</keyword>
<keyword id="KW-0067">ATP-binding</keyword>
<keyword id="KW-0997">Cell inner membrane</keyword>
<keyword id="KW-1003">Cell membrane</keyword>
<keyword id="KW-0406">Ion transport</keyword>
<keyword id="KW-0408">Iron</keyword>
<keyword id="KW-0410">Iron transport</keyword>
<keyword id="KW-0472">Membrane</keyword>
<keyword id="KW-0547">Nucleotide-binding</keyword>
<keyword id="KW-1185">Reference proteome</keyword>
<keyword id="KW-1278">Translocase</keyword>
<keyword id="KW-0813">Transport</keyword>
<protein>
    <recommendedName>
        <fullName evidence="5">Iron(3+)-hydroxamate import ATP-binding protein FhuC</fullName>
        <ecNumber evidence="2 4">7.2.2.16</ecNumber>
    </recommendedName>
    <alternativeName>
        <fullName evidence="5">Ferric hydroxamate uptake protein C</fullName>
    </alternativeName>
    <alternativeName>
        <fullName evidence="5">Ferrichrome transport ATP-binding protein FhuC</fullName>
    </alternativeName>
    <alternativeName>
        <fullName evidence="5">Iron(III)-hydroxamate import ATP-binding protein FhuC</fullName>
    </alternativeName>
</protein>
<gene>
    <name type="primary">fhuC</name>
    <name type="ordered locus">b0151</name>
    <name type="ordered locus">JW0147</name>
</gene>
<comment type="function">
    <text evidence="2 4">Part of the ABC transporter complex FhuCDB involved in iron(3+)-hydroxamate import. Responsible for energy coupling to the transport system.</text>
</comment>
<comment type="catalytic activity">
    <reaction evidence="2 4">
        <text>ATP + H2O + Fe(3+)-hydroxamate complex-[hydroxamate-binding protein]Side 1 = ADP + phosphate + Fe(3+)-hydroxamate complexSide 2 + [hydroxamate-binding protein]Side 1.</text>
        <dbReference type="EC" id="7.2.2.16"/>
    </reaction>
</comment>
<comment type="activity regulation">
    <text evidence="4">ATPase activity is inhibited by vanadate.</text>
</comment>
<comment type="biophysicochemical properties">
    <kinetics>
        <KM evidence="4">0.69 mM for ATP using FhuCB complex</KM>
        <KM evidence="4">0.74 mM for ATP using FhuCB complex with enclosed FhuD</KM>
        <KM evidence="4">0.77 mM for ATP using FhuCB complex with enclosed ferrichrome-loaded FhuD</KM>
        <Vmax evidence="4">745.0 nmol/min/mg enzyme using FhuCB complex</Vmax>
        <Vmax evidence="4">127.0 nmol/min/mg enzyme using FhuCB complex with enclosed FhuD</Vmax>
        <Vmax evidence="4">155.0 nmol/min/mg enzyme using FhuCB complex with enclosed ferrichrome-loaded FhuD</Vmax>
    </kinetics>
</comment>
<comment type="subunit">
    <text evidence="2 4">The complex is composed of two ATP-binding proteins (FhuC), a transmembrane protein (FhuB) and a solute-binding protein (FhuD) (PubMed:34887516). FhuC interacts with FhuB (PubMed:1551849).</text>
</comment>
<comment type="subcellular location">
    <subcellularLocation>
        <location evidence="2">Cell inner membrane</location>
        <topology evidence="2">Peripheral membrane protein</topology>
    </subcellularLocation>
    <text evidence="2">FhuB mediates the association of FhuC with the cytoplasmic membrane.</text>
</comment>
<comment type="induction">
    <text evidence="3">Induced 1.6-fold by hydroxyurea.</text>
</comment>
<comment type="similarity">
    <text evidence="5">Belongs to the ABC transporter superfamily. Iron (Fe3+)-hydroxamate importer (TC 3.A.1.14.7) family.</text>
</comment>
<proteinExistence type="evidence at protein level"/>
<evidence type="ECO:0000255" key="1">
    <source>
        <dbReference type="PROSITE-ProRule" id="PRU00434"/>
    </source>
</evidence>
<evidence type="ECO:0000269" key="2">
    <source>
    </source>
</evidence>
<evidence type="ECO:0000269" key="3">
    <source>
    </source>
</evidence>
<evidence type="ECO:0000269" key="4">
    <source>
    </source>
</evidence>
<evidence type="ECO:0000305" key="5"/>
<evidence type="ECO:0007829" key="6">
    <source>
        <dbReference type="PDB" id="7LB8"/>
    </source>
</evidence>
<dbReference type="EC" id="7.2.2.16" evidence="2 4"/>
<dbReference type="EMBL" id="M12486">
    <property type="protein sequence ID" value="AAB61769.1"/>
    <property type="molecule type" value="Genomic_DNA"/>
</dbReference>
<dbReference type="EMBL" id="X05810">
    <property type="protein sequence ID" value="CAA29254.1"/>
    <property type="molecule type" value="Genomic_DNA"/>
</dbReference>
<dbReference type="EMBL" id="U70214">
    <property type="protein sequence ID" value="AAB08581.1"/>
    <property type="molecule type" value="Genomic_DNA"/>
</dbReference>
<dbReference type="EMBL" id="U00096">
    <property type="protein sequence ID" value="AAC73262.1"/>
    <property type="molecule type" value="Genomic_DNA"/>
</dbReference>
<dbReference type="EMBL" id="AP009048">
    <property type="protein sequence ID" value="BAB96727.2"/>
    <property type="molecule type" value="Genomic_DNA"/>
</dbReference>
<dbReference type="PIR" id="G64738">
    <property type="entry name" value="QRECFH"/>
</dbReference>
<dbReference type="RefSeq" id="NP_414693.1">
    <property type="nucleotide sequence ID" value="NC_000913.3"/>
</dbReference>
<dbReference type="RefSeq" id="WP_001158931.1">
    <property type="nucleotide sequence ID" value="NZ_STEB01000032.1"/>
</dbReference>
<dbReference type="PDB" id="7LB8">
    <property type="method" value="EM"/>
    <property type="resolution" value="3.40 A"/>
    <property type="chains" value="C/U=1-265"/>
</dbReference>
<dbReference type="PDBsum" id="7LB8"/>
<dbReference type="EMDB" id="EMD-23251"/>
<dbReference type="SMR" id="P07821"/>
<dbReference type="BioGRID" id="4261072">
    <property type="interactions" value="357"/>
</dbReference>
<dbReference type="BioGRID" id="849632">
    <property type="interactions" value="2"/>
</dbReference>
<dbReference type="ComplexPortal" id="CPX-4286">
    <property type="entry name" value="Ferric-hydroxamate ABC transporter complex"/>
</dbReference>
<dbReference type="FunCoup" id="P07821">
    <property type="interactions" value="216"/>
</dbReference>
<dbReference type="IntAct" id="P07821">
    <property type="interactions" value="5"/>
</dbReference>
<dbReference type="STRING" id="511145.b0151"/>
<dbReference type="TCDB" id="3.A.1.14.3">
    <property type="family name" value="the atp-binding cassette (abc) superfamily"/>
</dbReference>
<dbReference type="PaxDb" id="511145-b0151"/>
<dbReference type="EnsemblBacteria" id="AAC73262">
    <property type="protein sequence ID" value="AAC73262"/>
    <property type="gene ID" value="b0151"/>
</dbReference>
<dbReference type="GeneID" id="945250"/>
<dbReference type="KEGG" id="ecj:JW0147"/>
<dbReference type="KEGG" id="eco:b0151"/>
<dbReference type="KEGG" id="ecoc:C3026_00685"/>
<dbReference type="PATRIC" id="fig|1411691.4.peg.2129"/>
<dbReference type="EchoBASE" id="EB0300"/>
<dbReference type="eggNOG" id="COG1120">
    <property type="taxonomic scope" value="Bacteria"/>
</dbReference>
<dbReference type="InParanoid" id="P07821"/>
<dbReference type="OMA" id="GQKQLAW"/>
<dbReference type="OrthoDB" id="5292475at2"/>
<dbReference type="PhylomeDB" id="P07821"/>
<dbReference type="BioCyc" id="EcoCyc:FHUC-MONOMER"/>
<dbReference type="BioCyc" id="MetaCyc:FHUC-MONOMER"/>
<dbReference type="PRO" id="PR:P07821"/>
<dbReference type="Proteomes" id="UP000000625">
    <property type="component" value="Chromosome"/>
</dbReference>
<dbReference type="GO" id="GO:0043190">
    <property type="term" value="C:ATP-binding cassette (ABC) transporter complex"/>
    <property type="evidence" value="ECO:0000304"/>
    <property type="project" value="EcoCyc"/>
</dbReference>
<dbReference type="GO" id="GO:0055052">
    <property type="term" value="C:ATP-binding cassette (ABC) transporter complex, substrate-binding subunit-containing"/>
    <property type="evidence" value="ECO:0000314"/>
    <property type="project" value="UniProtKB"/>
</dbReference>
<dbReference type="GO" id="GO:0005886">
    <property type="term" value="C:plasma membrane"/>
    <property type="evidence" value="ECO:0000314"/>
    <property type="project" value="UniProtKB"/>
</dbReference>
<dbReference type="GO" id="GO:0015625">
    <property type="term" value="F:ABC-type ferric hydroxamate transporter activity"/>
    <property type="evidence" value="ECO:0000314"/>
    <property type="project" value="UniProtKB"/>
</dbReference>
<dbReference type="GO" id="GO:0005524">
    <property type="term" value="F:ATP binding"/>
    <property type="evidence" value="ECO:0000255"/>
    <property type="project" value="EcoCyc"/>
</dbReference>
<dbReference type="GO" id="GO:0016887">
    <property type="term" value="F:ATP hydrolysis activity"/>
    <property type="evidence" value="ECO:0007669"/>
    <property type="project" value="InterPro"/>
</dbReference>
<dbReference type="GO" id="GO:0015091">
    <property type="term" value="F:ferric iron transmembrane transporter activity"/>
    <property type="evidence" value="ECO:0000314"/>
    <property type="project" value="UniProtKB"/>
</dbReference>
<dbReference type="GO" id="GO:0015344">
    <property type="term" value="F:siderophore uptake transmembrane transporter activity"/>
    <property type="evidence" value="ECO:0000269"/>
    <property type="project" value="EcoCyc"/>
</dbReference>
<dbReference type="GO" id="GO:0015687">
    <property type="term" value="P:ferric-hydroxamate import into cell"/>
    <property type="evidence" value="ECO:0000269"/>
    <property type="project" value="EcoCyc"/>
</dbReference>
<dbReference type="GO" id="GO:0098711">
    <property type="term" value="P:iron ion import across plasma membrane"/>
    <property type="evidence" value="ECO:0000303"/>
    <property type="project" value="ComplexPortal"/>
</dbReference>
<dbReference type="CDD" id="cd03214">
    <property type="entry name" value="ABC_Iron-Siderophores_B12_Hemin"/>
    <property type="match status" value="1"/>
</dbReference>
<dbReference type="FunFam" id="3.40.50.300:FF:000435">
    <property type="entry name" value="Ferrichrome ABC transporter, ATP-binding protein FhuC"/>
    <property type="match status" value="1"/>
</dbReference>
<dbReference type="Gene3D" id="3.40.50.300">
    <property type="entry name" value="P-loop containing nucleotide triphosphate hydrolases"/>
    <property type="match status" value="1"/>
</dbReference>
<dbReference type="InterPro" id="IPR003593">
    <property type="entry name" value="AAA+_ATPase"/>
</dbReference>
<dbReference type="InterPro" id="IPR003439">
    <property type="entry name" value="ABC_transporter-like_ATP-bd"/>
</dbReference>
<dbReference type="InterPro" id="IPR017871">
    <property type="entry name" value="ABC_transporter-like_CS"/>
</dbReference>
<dbReference type="InterPro" id="IPR027417">
    <property type="entry name" value="P-loop_NTPase"/>
</dbReference>
<dbReference type="InterPro" id="IPR051535">
    <property type="entry name" value="Siderophore_ABC-ATPase"/>
</dbReference>
<dbReference type="NCBIfam" id="NF007863">
    <property type="entry name" value="PRK10575.1"/>
    <property type="match status" value="1"/>
</dbReference>
<dbReference type="PANTHER" id="PTHR42771">
    <property type="entry name" value="IRON(3+)-HYDROXAMATE IMPORT ATP-BINDING PROTEIN FHUC"/>
    <property type="match status" value="1"/>
</dbReference>
<dbReference type="PANTHER" id="PTHR42771:SF2">
    <property type="entry name" value="IRON(3+)-HYDROXAMATE IMPORT ATP-BINDING PROTEIN FHUC"/>
    <property type="match status" value="1"/>
</dbReference>
<dbReference type="Pfam" id="PF00005">
    <property type="entry name" value="ABC_tran"/>
    <property type="match status" value="1"/>
</dbReference>
<dbReference type="SMART" id="SM00382">
    <property type="entry name" value="AAA"/>
    <property type="match status" value="1"/>
</dbReference>
<dbReference type="SUPFAM" id="SSF52540">
    <property type="entry name" value="P-loop containing nucleoside triphosphate hydrolases"/>
    <property type="match status" value="1"/>
</dbReference>
<dbReference type="PROSITE" id="PS00211">
    <property type="entry name" value="ABC_TRANSPORTER_1"/>
    <property type="match status" value="1"/>
</dbReference>
<dbReference type="PROSITE" id="PS50893">
    <property type="entry name" value="ABC_TRANSPORTER_2"/>
    <property type="match status" value="1"/>
</dbReference>
<accession>P07821</accession>
<accession>P77548</accession>
<reference key="1">
    <citation type="journal article" date="1987" name="J. Bacteriol.">
        <title>fhuC and fhuD genes for iron (III)-ferrichrome transport into Escherichia coli K-12.</title>
        <authorList>
            <person name="Coulton J.W."/>
            <person name="Mason P."/>
            <person name="Allatt D.D."/>
        </authorList>
    </citation>
    <scope>NUCLEOTIDE SEQUENCE [GENOMIC DNA]</scope>
    <source>
        <strain>K12</strain>
    </source>
</reference>
<reference key="2">
    <citation type="journal article" date="1987" name="Mol. Gen. Genet.">
        <title>Nucleotide sequence of the fhuC and fhuD genes involved in iron (III) hydroxamate transport: domains in FhuC homologous to ATP-binding proteins.</title>
        <authorList>
            <person name="Burkhardt R."/>
            <person name="Braun V."/>
        </authorList>
    </citation>
    <scope>NUCLEOTIDE SEQUENCE [GENOMIC DNA]</scope>
</reference>
<reference key="3">
    <citation type="journal article" date="1994" name="Nucleic Acids Res.">
        <title>Systematic sequencing of the Escherichia coli genome: analysis of the 2.4-4.1 min (110,917-193,643 bp) region.</title>
        <authorList>
            <person name="Fujita N."/>
            <person name="Mori H."/>
            <person name="Yura T."/>
            <person name="Ishihama A."/>
        </authorList>
    </citation>
    <scope>NUCLEOTIDE SEQUENCE [LARGE SCALE GENOMIC DNA]</scope>
    <source>
        <strain>K12 / W3110 / ATCC 27325 / DSM 5911</strain>
    </source>
</reference>
<reference key="4">
    <citation type="submission" date="1997-01" db="EMBL/GenBank/DDBJ databases">
        <title>Sequence of minutes 4-25 of Escherichia coli.</title>
        <authorList>
            <person name="Chung E."/>
            <person name="Allen E."/>
            <person name="Araujo R."/>
            <person name="Aparicio A.M."/>
            <person name="Davis K."/>
            <person name="Duncan M."/>
            <person name="Federspiel N."/>
            <person name="Hyman R."/>
            <person name="Kalman S."/>
            <person name="Komp C."/>
            <person name="Kurdi O."/>
            <person name="Lew H."/>
            <person name="Lin D."/>
            <person name="Namath A."/>
            <person name="Oefner P."/>
            <person name="Roberts D."/>
            <person name="Schramm S."/>
            <person name="Davis R.W."/>
        </authorList>
    </citation>
    <scope>NUCLEOTIDE SEQUENCE [LARGE SCALE GENOMIC DNA]</scope>
    <source>
        <strain>K12 / MG1655 / ATCC 47076</strain>
    </source>
</reference>
<reference key="5">
    <citation type="journal article" date="1997" name="Science">
        <title>The complete genome sequence of Escherichia coli K-12.</title>
        <authorList>
            <person name="Blattner F.R."/>
            <person name="Plunkett G. III"/>
            <person name="Bloch C.A."/>
            <person name="Perna N.T."/>
            <person name="Burland V."/>
            <person name="Riley M."/>
            <person name="Collado-Vides J."/>
            <person name="Glasner J.D."/>
            <person name="Rode C.K."/>
            <person name="Mayhew G.F."/>
            <person name="Gregor J."/>
            <person name="Davis N.W."/>
            <person name="Kirkpatrick H.A."/>
            <person name="Goeden M.A."/>
            <person name="Rose D.J."/>
            <person name="Mau B."/>
            <person name="Shao Y."/>
        </authorList>
    </citation>
    <scope>NUCLEOTIDE SEQUENCE [LARGE SCALE GENOMIC DNA]</scope>
    <source>
        <strain>K12 / MG1655 / ATCC 47076</strain>
    </source>
</reference>
<reference key="6">
    <citation type="journal article" date="2006" name="Mol. Syst. Biol.">
        <title>Highly accurate genome sequences of Escherichia coli K-12 strains MG1655 and W3110.</title>
        <authorList>
            <person name="Hayashi K."/>
            <person name="Morooka N."/>
            <person name="Yamamoto Y."/>
            <person name="Fujita K."/>
            <person name="Isono K."/>
            <person name="Choi S."/>
            <person name="Ohtsubo E."/>
            <person name="Baba T."/>
            <person name="Wanner B.L."/>
            <person name="Mori H."/>
            <person name="Horiuchi T."/>
        </authorList>
    </citation>
    <scope>NUCLEOTIDE SEQUENCE [LARGE SCALE GENOMIC DNA]</scope>
    <source>
        <strain>K12 / W3110 / ATCC 27325 / DSM 5911</strain>
    </source>
</reference>
<reference key="7">
    <citation type="journal article" date="1992" name="J. Bacteriol.">
        <title>Iron(III) hydroxamate transport in Escherichia coli K-12: FhuB-mediated membrane association of the FhuC protein and negative complementation of fhuC mutants.</title>
        <authorList>
            <person name="Schultz-Hauser G."/>
            <person name="Koester W."/>
            <person name="Schwarz H."/>
            <person name="Braun V."/>
        </authorList>
    </citation>
    <scope>FUNCTION IN IRON(3+)-HYDROXAMATE TRANSPORT</scope>
    <scope>CATALYTIC ACTIVITY</scope>
    <scope>INTERACTION WITH FHUB</scope>
    <scope>SUBCELLULAR LOCATION</scope>
    <scope>MUTAGENESIS OF LYS-50 AND ASP-172</scope>
    <source>
        <strain>K12</strain>
    </source>
</reference>
<reference key="8">
    <citation type="journal article" date="2009" name="Mol. Cell">
        <title>Hydroxyurea induces hydroxyl radical-mediated cell death in Escherichia coli.</title>
        <authorList>
            <person name="Davies B.W."/>
            <person name="Kohanski M.A."/>
            <person name="Simmons L.A."/>
            <person name="Winkler J.A."/>
            <person name="Collins J.J."/>
            <person name="Walker G.C."/>
        </authorList>
    </citation>
    <scope>INDUCTION BY HYDROXYUREA</scope>
    <source>
        <strain>K12 / MC4100 / ATCC 35695 / DSM 6574</strain>
    </source>
</reference>
<reference key="9">
    <citation type="journal article" date="2021" name="Commun. Biol.">
        <title>Cryo-EM reveals unique structural features of the FhuCDB Escherichia coli ferrichrome importer.</title>
        <authorList>
            <person name="Hu W."/>
            <person name="Zheng H."/>
        </authorList>
    </citation>
    <scope>STRUCTURE BY ELECTRON MICROSCOPY (3.4 ANGSTROMS)</scope>
    <scope>FUNCTION</scope>
    <scope>CATALYTIC ACTIVITY</scope>
    <scope>ACTIVITY REGULATION</scope>
    <scope>BIOPHYSICOCHEMICAL PROPERTIES</scope>
    <scope>SUBUNIT</scope>
    <scope>MUTAGENESIS OF GLU-173</scope>
    <scope>SUBSTRATE IMPORT MECHANISM OF THE FHUCDB COMPLEX</scope>
</reference>
<sequence length="265" mass="28886">MQEYTNHSDTTFALRNISFRVPGRTLLHPLSLTFPAGKVTGLIGHNGSGKSTLLKMLGRHQPPSEGEILLDAQPLESWSSKAFARKVAYLPQQLPPAEGMTVRELVAIGRYPWHGALGRFGAADREKVEEAISLVGLKPLAHRLVDSLSGGERQRAWIAMLVAQDSRCLLLDEPTSALDIAHQVDVLSLVHRLSQERGLTVIAVLHDINMAARYCDYLVALRGGEMIAQGTPAEIMRGETLEMIYGIPMGILPHPAGAAPVSFVY</sequence>